<accession>B3WF63</accession>
<keyword id="KW-0489">Methyltransferase</keyword>
<keyword id="KW-0949">S-adenosyl-L-methionine</keyword>
<keyword id="KW-0808">Transferase</keyword>
<keyword id="KW-0819">tRNA processing</keyword>
<name>TRMB_LACCB</name>
<gene>
    <name evidence="2" type="primary">trmB</name>
    <name type="ordered locus">LCABL_19350</name>
</gene>
<dbReference type="EC" id="2.1.1.33" evidence="2"/>
<dbReference type="EMBL" id="FM177140">
    <property type="protein sequence ID" value="CAQ67014.1"/>
    <property type="molecule type" value="Genomic_DNA"/>
</dbReference>
<dbReference type="SMR" id="B3WF63"/>
<dbReference type="KEGG" id="lcb:LCABL_19350"/>
<dbReference type="HOGENOM" id="CLU_050910_2_1_9"/>
<dbReference type="UniPathway" id="UPA00989"/>
<dbReference type="GO" id="GO:0043527">
    <property type="term" value="C:tRNA methyltransferase complex"/>
    <property type="evidence" value="ECO:0007669"/>
    <property type="project" value="TreeGrafter"/>
</dbReference>
<dbReference type="GO" id="GO:0008176">
    <property type="term" value="F:tRNA (guanine(46)-N7)-methyltransferase activity"/>
    <property type="evidence" value="ECO:0007669"/>
    <property type="project" value="UniProtKB-UniRule"/>
</dbReference>
<dbReference type="CDD" id="cd02440">
    <property type="entry name" value="AdoMet_MTases"/>
    <property type="match status" value="1"/>
</dbReference>
<dbReference type="FunFam" id="3.40.50.150:FF:000035">
    <property type="entry name" value="tRNA (guanine-N(7)-)-methyltransferase"/>
    <property type="match status" value="1"/>
</dbReference>
<dbReference type="Gene3D" id="3.40.50.150">
    <property type="entry name" value="Vaccinia Virus protein VP39"/>
    <property type="match status" value="1"/>
</dbReference>
<dbReference type="HAMAP" id="MF_01057">
    <property type="entry name" value="tRNA_methyltr_TrmB"/>
    <property type="match status" value="1"/>
</dbReference>
<dbReference type="InterPro" id="IPR029063">
    <property type="entry name" value="SAM-dependent_MTases_sf"/>
</dbReference>
<dbReference type="InterPro" id="IPR003358">
    <property type="entry name" value="tRNA_(Gua-N-7)_MeTrfase_Trmb"/>
</dbReference>
<dbReference type="InterPro" id="IPR055361">
    <property type="entry name" value="tRNA_methyltr_TrmB_bact"/>
</dbReference>
<dbReference type="NCBIfam" id="NF001080">
    <property type="entry name" value="PRK00121.2-2"/>
    <property type="match status" value="1"/>
</dbReference>
<dbReference type="NCBIfam" id="TIGR00091">
    <property type="entry name" value="tRNA (guanosine(46)-N7)-methyltransferase TrmB"/>
    <property type="match status" value="1"/>
</dbReference>
<dbReference type="PANTHER" id="PTHR23417">
    <property type="entry name" value="3-DEOXY-D-MANNO-OCTULOSONIC-ACID TRANSFERASE/TRNA GUANINE-N 7 - -METHYLTRANSFERASE"/>
    <property type="match status" value="1"/>
</dbReference>
<dbReference type="PANTHER" id="PTHR23417:SF14">
    <property type="entry name" value="PENTACOTRIPEPTIDE-REPEAT REGION OF PRORP DOMAIN-CONTAINING PROTEIN"/>
    <property type="match status" value="1"/>
</dbReference>
<dbReference type="Pfam" id="PF02390">
    <property type="entry name" value="Methyltransf_4"/>
    <property type="match status" value="1"/>
</dbReference>
<dbReference type="SUPFAM" id="SSF53335">
    <property type="entry name" value="S-adenosyl-L-methionine-dependent methyltransferases"/>
    <property type="match status" value="1"/>
</dbReference>
<dbReference type="PROSITE" id="PS51625">
    <property type="entry name" value="SAM_MT_TRMB"/>
    <property type="match status" value="1"/>
</dbReference>
<reference key="1">
    <citation type="submission" date="2008-06" db="EMBL/GenBank/DDBJ databases">
        <title>Lactobacillus casei BL23 complete genome sequence.</title>
        <authorList>
            <person name="Maze A."/>
            <person name="Boel G."/>
            <person name="Bourand A."/>
            <person name="Loux V."/>
            <person name="Gibrat J.F."/>
            <person name="Zuniga M."/>
            <person name="Hartke A."/>
            <person name="Deutscher J."/>
        </authorList>
    </citation>
    <scope>NUCLEOTIDE SEQUENCE [LARGE SCALE GENOMIC DNA]</scope>
    <source>
        <strain>BL23</strain>
    </source>
</reference>
<organism>
    <name type="scientific">Lacticaseibacillus casei (strain BL23)</name>
    <name type="common">Lactobacillus casei</name>
    <dbReference type="NCBI Taxonomy" id="543734"/>
    <lineage>
        <taxon>Bacteria</taxon>
        <taxon>Bacillati</taxon>
        <taxon>Bacillota</taxon>
        <taxon>Bacilli</taxon>
        <taxon>Lactobacillales</taxon>
        <taxon>Lactobacillaceae</taxon>
        <taxon>Lacticaseibacillus</taxon>
    </lineage>
</organism>
<proteinExistence type="inferred from homology"/>
<protein>
    <recommendedName>
        <fullName evidence="2">tRNA (guanine-N(7)-)-methyltransferase</fullName>
        <ecNumber evidence="2">2.1.1.33</ecNumber>
    </recommendedName>
    <alternativeName>
        <fullName evidence="2">tRNA (guanine(46)-N(7))-methyltransferase</fullName>
    </alternativeName>
    <alternativeName>
        <fullName evidence="2">tRNA(m7G46)-methyltransferase</fullName>
    </alternativeName>
</protein>
<sequence length="214" mass="24946">MRLRNKQWAKPLILAHPEMILVRPEKMQGHWQSRFDQARPLYLEVGSGKGQFIVEMAKTHPDRNFIALELQEAAVAMILKKQVALKLPNLQLVLGDGADLTDYFSEGEIDGLFLNFSDPWPKTRHEKRRLTYRDFLRQYQAIMKPDALLQFKTDNQGLFEYSLVSMNHFGMTFDLVSLNLHHDKRVTDNVPTEYEEKFSADGGRIYELVAHFKH</sequence>
<feature type="chain" id="PRO_1000136351" description="tRNA (guanine-N(7)-)-methyltransferase">
    <location>
        <begin position="1"/>
        <end position="214"/>
    </location>
</feature>
<feature type="region of interest" description="Interaction with RNA" evidence="2">
    <location>
        <begin position="124"/>
        <end position="129"/>
    </location>
</feature>
<feature type="active site" evidence="1">
    <location>
        <position position="118"/>
    </location>
</feature>
<feature type="binding site" evidence="2">
    <location>
        <position position="44"/>
    </location>
    <ligand>
        <name>S-adenosyl-L-methionine</name>
        <dbReference type="ChEBI" id="CHEBI:59789"/>
    </ligand>
</feature>
<feature type="binding site" evidence="2">
    <location>
        <position position="69"/>
    </location>
    <ligand>
        <name>S-adenosyl-L-methionine</name>
        <dbReference type="ChEBI" id="CHEBI:59789"/>
    </ligand>
</feature>
<feature type="binding site" evidence="2">
    <location>
        <position position="96"/>
    </location>
    <ligand>
        <name>S-adenosyl-L-methionine</name>
        <dbReference type="ChEBI" id="CHEBI:59789"/>
    </ligand>
</feature>
<feature type="binding site" evidence="2">
    <location>
        <position position="118"/>
    </location>
    <ligand>
        <name>S-adenosyl-L-methionine</name>
        <dbReference type="ChEBI" id="CHEBI:59789"/>
    </ligand>
</feature>
<feature type="binding site" evidence="2">
    <location>
        <position position="122"/>
    </location>
    <ligand>
        <name>substrate</name>
    </ligand>
</feature>
<feature type="binding site" evidence="2">
    <location>
        <position position="154"/>
    </location>
    <ligand>
        <name>substrate</name>
    </ligand>
</feature>
<feature type="binding site" evidence="2">
    <location>
        <begin position="192"/>
        <end position="195"/>
    </location>
    <ligand>
        <name>substrate</name>
    </ligand>
</feature>
<evidence type="ECO:0000250" key="1"/>
<evidence type="ECO:0000255" key="2">
    <source>
        <dbReference type="HAMAP-Rule" id="MF_01057"/>
    </source>
</evidence>
<comment type="function">
    <text evidence="2">Catalyzes the formation of N(7)-methylguanine at position 46 (m7G46) in tRNA.</text>
</comment>
<comment type="catalytic activity">
    <reaction evidence="2">
        <text>guanosine(46) in tRNA + S-adenosyl-L-methionine = N(7)-methylguanosine(46) in tRNA + S-adenosyl-L-homocysteine</text>
        <dbReference type="Rhea" id="RHEA:42708"/>
        <dbReference type="Rhea" id="RHEA-COMP:10188"/>
        <dbReference type="Rhea" id="RHEA-COMP:10189"/>
        <dbReference type="ChEBI" id="CHEBI:57856"/>
        <dbReference type="ChEBI" id="CHEBI:59789"/>
        <dbReference type="ChEBI" id="CHEBI:74269"/>
        <dbReference type="ChEBI" id="CHEBI:74480"/>
        <dbReference type="EC" id="2.1.1.33"/>
    </reaction>
</comment>
<comment type="pathway">
    <text evidence="2">tRNA modification; N(7)-methylguanine-tRNA biosynthesis.</text>
</comment>
<comment type="similarity">
    <text evidence="2">Belongs to the class I-like SAM-binding methyltransferase superfamily. TrmB family.</text>
</comment>